<feature type="chain" id="PRO_1000011831" description="Diaminopimelate epimerase">
    <location>
        <begin position="1"/>
        <end position="281"/>
    </location>
</feature>
<feature type="active site" description="Proton donor" evidence="1">
    <location>
        <position position="79"/>
    </location>
</feature>
<feature type="active site" description="Proton acceptor" evidence="1">
    <location>
        <position position="223"/>
    </location>
</feature>
<feature type="binding site" evidence="1">
    <location>
        <position position="13"/>
    </location>
    <ligand>
        <name>substrate</name>
    </ligand>
</feature>
<feature type="binding site" evidence="1">
    <location>
        <position position="51"/>
    </location>
    <ligand>
        <name>substrate</name>
    </ligand>
</feature>
<feature type="binding site" evidence="1">
    <location>
        <position position="70"/>
    </location>
    <ligand>
        <name>substrate</name>
    </ligand>
</feature>
<feature type="binding site" evidence="1">
    <location>
        <begin position="80"/>
        <end position="81"/>
    </location>
    <ligand>
        <name>substrate</name>
    </ligand>
</feature>
<feature type="binding site" evidence="1">
    <location>
        <position position="163"/>
    </location>
    <ligand>
        <name>substrate</name>
    </ligand>
</feature>
<feature type="binding site" evidence="1">
    <location>
        <position position="196"/>
    </location>
    <ligand>
        <name>substrate</name>
    </ligand>
</feature>
<feature type="binding site" evidence="1">
    <location>
        <begin position="214"/>
        <end position="215"/>
    </location>
    <ligand>
        <name>substrate</name>
    </ligand>
</feature>
<feature type="binding site" evidence="1">
    <location>
        <begin position="224"/>
        <end position="225"/>
    </location>
    <ligand>
        <name>substrate</name>
    </ligand>
</feature>
<feature type="site" description="Could be important to modulate the pK values of the two catalytic cysteine residues" evidence="1">
    <location>
        <position position="165"/>
    </location>
</feature>
<feature type="site" description="Could be important to modulate the pK values of the two catalytic cysteine residues" evidence="1">
    <location>
        <position position="214"/>
    </location>
</feature>
<feature type="site" description="Important for dimerization" evidence="1">
    <location>
        <position position="273"/>
    </location>
</feature>
<name>DAPF_ALCBS</name>
<evidence type="ECO:0000255" key="1">
    <source>
        <dbReference type="HAMAP-Rule" id="MF_00197"/>
    </source>
</evidence>
<accession>Q0VM18</accession>
<gene>
    <name evidence="1" type="primary">dapF</name>
    <name type="ordered locus">ABO_2332</name>
</gene>
<proteinExistence type="inferred from homology"/>
<comment type="function">
    <text evidence="1">Catalyzes the stereoinversion of LL-2,6-diaminopimelate (L,L-DAP) to meso-diaminopimelate (meso-DAP), a precursor of L-lysine and an essential component of the bacterial peptidoglycan.</text>
</comment>
<comment type="catalytic activity">
    <reaction evidence="1">
        <text>(2S,6S)-2,6-diaminopimelate = meso-2,6-diaminopimelate</text>
        <dbReference type="Rhea" id="RHEA:15393"/>
        <dbReference type="ChEBI" id="CHEBI:57609"/>
        <dbReference type="ChEBI" id="CHEBI:57791"/>
        <dbReference type="EC" id="5.1.1.7"/>
    </reaction>
</comment>
<comment type="pathway">
    <text evidence="1">Amino-acid biosynthesis; L-lysine biosynthesis via DAP pathway; DL-2,6-diaminopimelate from LL-2,6-diaminopimelate: step 1/1.</text>
</comment>
<comment type="subunit">
    <text evidence="1">Homodimer.</text>
</comment>
<comment type="subcellular location">
    <subcellularLocation>
        <location evidence="1">Cytoplasm</location>
    </subcellularLocation>
</comment>
<comment type="similarity">
    <text evidence="1">Belongs to the diaminopimelate epimerase family.</text>
</comment>
<protein>
    <recommendedName>
        <fullName evidence="1">Diaminopimelate epimerase</fullName>
        <shortName evidence="1">DAP epimerase</shortName>
        <ecNumber evidence="1">5.1.1.7</ecNumber>
    </recommendedName>
    <alternativeName>
        <fullName evidence="1">PLP-independent amino acid racemase</fullName>
    </alternativeName>
</protein>
<reference key="1">
    <citation type="journal article" date="2006" name="Nat. Biotechnol.">
        <title>Genome sequence of the ubiquitous hydrocarbon-degrading marine bacterium Alcanivorax borkumensis.</title>
        <authorList>
            <person name="Schneiker S."/>
            <person name="Martins dos Santos V.A.P."/>
            <person name="Bartels D."/>
            <person name="Bekel T."/>
            <person name="Brecht M."/>
            <person name="Buhrmester J."/>
            <person name="Chernikova T.N."/>
            <person name="Denaro R."/>
            <person name="Ferrer M."/>
            <person name="Gertler C."/>
            <person name="Goesmann A."/>
            <person name="Golyshina O.V."/>
            <person name="Kaminski F."/>
            <person name="Khachane A.N."/>
            <person name="Lang S."/>
            <person name="Linke B."/>
            <person name="McHardy A.C."/>
            <person name="Meyer F."/>
            <person name="Nechitaylo T."/>
            <person name="Puehler A."/>
            <person name="Regenhardt D."/>
            <person name="Rupp O."/>
            <person name="Sabirova J.S."/>
            <person name="Selbitschka W."/>
            <person name="Yakimov M.M."/>
            <person name="Timmis K.N."/>
            <person name="Vorhoelter F.-J."/>
            <person name="Weidner S."/>
            <person name="Kaiser O."/>
            <person name="Golyshin P.N."/>
        </authorList>
    </citation>
    <scope>NUCLEOTIDE SEQUENCE [LARGE SCALE GENOMIC DNA]</scope>
    <source>
        <strain>ATCC 700651 / DSM 11573 / NCIMB 13689 / SK2</strain>
    </source>
</reference>
<keyword id="KW-0028">Amino-acid biosynthesis</keyword>
<keyword id="KW-0963">Cytoplasm</keyword>
<keyword id="KW-0413">Isomerase</keyword>
<keyword id="KW-0457">Lysine biosynthesis</keyword>
<keyword id="KW-1185">Reference proteome</keyword>
<organism>
    <name type="scientific">Alcanivorax borkumensis (strain ATCC 700651 / DSM 11573 / NCIMB 13689 / SK2)</name>
    <dbReference type="NCBI Taxonomy" id="393595"/>
    <lineage>
        <taxon>Bacteria</taxon>
        <taxon>Pseudomonadati</taxon>
        <taxon>Pseudomonadota</taxon>
        <taxon>Gammaproteobacteria</taxon>
        <taxon>Oceanospirillales</taxon>
        <taxon>Alcanivoracaceae</taxon>
        <taxon>Alcanivorax</taxon>
    </lineage>
</organism>
<sequence length="281" mass="30363">MNLRFTKMHGLGNDFMVIDGIRQSLPETGLPLPADEIRRLADRKFGVGFDQMLIVQPAQGDADFRYRILNADGSEVSQCGNGARCFARFVREQGLTDKKSIRVETAAGQMTLSVTDDDQITVDMGAPRWAPDAIPMTAKAEADNYFLVSGTQAWDVGAVGLGNPHCTLLVENVDTAPVDTVGPLLESHEQFPERANVGFMQIVSRNEIRLRVYERGAGETLACGSGACAAVVIGQRRDWLDDTVTVHLPGGTLHVCYDGQGGIQMTGPASHVYDGAIEIAL</sequence>
<dbReference type="EC" id="5.1.1.7" evidence="1"/>
<dbReference type="EMBL" id="AM286690">
    <property type="protein sequence ID" value="CAL17780.1"/>
    <property type="molecule type" value="Genomic_DNA"/>
</dbReference>
<dbReference type="RefSeq" id="WP_011589606.1">
    <property type="nucleotide sequence ID" value="NC_008260.1"/>
</dbReference>
<dbReference type="SMR" id="Q0VM18"/>
<dbReference type="STRING" id="393595.ABO_2332"/>
<dbReference type="KEGG" id="abo:ABO_2332"/>
<dbReference type="eggNOG" id="COG0253">
    <property type="taxonomic scope" value="Bacteria"/>
</dbReference>
<dbReference type="HOGENOM" id="CLU_053306_1_1_6"/>
<dbReference type="OrthoDB" id="9805408at2"/>
<dbReference type="UniPathway" id="UPA00034">
    <property type="reaction ID" value="UER00025"/>
</dbReference>
<dbReference type="Proteomes" id="UP000008871">
    <property type="component" value="Chromosome"/>
</dbReference>
<dbReference type="GO" id="GO:0005829">
    <property type="term" value="C:cytosol"/>
    <property type="evidence" value="ECO:0007669"/>
    <property type="project" value="TreeGrafter"/>
</dbReference>
<dbReference type="GO" id="GO:0008837">
    <property type="term" value="F:diaminopimelate epimerase activity"/>
    <property type="evidence" value="ECO:0007669"/>
    <property type="project" value="UniProtKB-UniRule"/>
</dbReference>
<dbReference type="GO" id="GO:0009089">
    <property type="term" value="P:lysine biosynthetic process via diaminopimelate"/>
    <property type="evidence" value="ECO:0007669"/>
    <property type="project" value="UniProtKB-UniRule"/>
</dbReference>
<dbReference type="FunFam" id="3.10.310.10:FF:000001">
    <property type="entry name" value="Diaminopimelate epimerase"/>
    <property type="match status" value="1"/>
</dbReference>
<dbReference type="Gene3D" id="3.10.310.10">
    <property type="entry name" value="Diaminopimelate Epimerase, Chain A, domain 1"/>
    <property type="match status" value="2"/>
</dbReference>
<dbReference type="HAMAP" id="MF_00197">
    <property type="entry name" value="DAP_epimerase"/>
    <property type="match status" value="1"/>
</dbReference>
<dbReference type="InterPro" id="IPR018510">
    <property type="entry name" value="DAP_epimerase_AS"/>
</dbReference>
<dbReference type="InterPro" id="IPR001653">
    <property type="entry name" value="DAP_epimerase_DapF"/>
</dbReference>
<dbReference type="NCBIfam" id="TIGR00652">
    <property type="entry name" value="DapF"/>
    <property type="match status" value="1"/>
</dbReference>
<dbReference type="PANTHER" id="PTHR31689:SF0">
    <property type="entry name" value="DIAMINOPIMELATE EPIMERASE"/>
    <property type="match status" value="1"/>
</dbReference>
<dbReference type="PANTHER" id="PTHR31689">
    <property type="entry name" value="DIAMINOPIMELATE EPIMERASE, CHLOROPLASTIC"/>
    <property type="match status" value="1"/>
</dbReference>
<dbReference type="Pfam" id="PF01678">
    <property type="entry name" value="DAP_epimerase"/>
    <property type="match status" value="2"/>
</dbReference>
<dbReference type="SUPFAM" id="SSF54506">
    <property type="entry name" value="Diaminopimelate epimerase-like"/>
    <property type="match status" value="1"/>
</dbReference>
<dbReference type="PROSITE" id="PS01326">
    <property type="entry name" value="DAP_EPIMERASE"/>
    <property type="match status" value="1"/>
</dbReference>